<proteinExistence type="inferred from homology"/>
<organism>
    <name type="scientific">Bacillus pumilus</name>
    <name type="common">Bacillus mesentericus</name>
    <dbReference type="NCBI Taxonomy" id="1408"/>
    <lineage>
        <taxon>Bacteria</taxon>
        <taxon>Bacillati</taxon>
        <taxon>Bacillota</taxon>
        <taxon>Bacilli</taxon>
        <taxon>Bacillales</taxon>
        <taxon>Bacillaceae</taxon>
        <taxon>Bacillus</taxon>
    </lineage>
</organism>
<gene>
    <name type="primary">spo0A</name>
</gene>
<reference key="1">
    <citation type="journal article" date="1994" name="Mol. Microbiol.">
        <title>Characterization of spo0A homologues in diverse Bacillus and Clostridium species identifies a probable DNA-binding domain.</title>
        <authorList>
            <person name="Brown D.P."/>
            <person name="Ganova-Raeva L."/>
            <person name="Green B.D."/>
            <person name="Wilkinson S.R."/>
            <person name="Young M."/>
            <person name="Youngman P."/>
        </authorList>
    </citation>
    <scope>NUCLEOTIDE SEQUENCE [GENOMIC DNA]</scope>
    <source>
        <strain>PB4</strain>
    </source>
</reference>
<evidence type="ECO:0000250" key="1"/>
<evidence type="ECO:0000255" key="2"/>
<evidence type="ECO:0000255" key="3">
    <source>
        <dbReference type="PROSITE-ProRule" id="PRU00169"/>
    </source>
</evidence>
<evidence type="ECO:0000256" key="4">
    <source>
        <dbReference type="SAM" id="MobiDB-lite"/>
    </source>
</evidence>
<evidence type="ECO:0000305" key="5"/>
<dbReference type="EMBL" id="U09975">
    <property type="protein sequence ID" value="AAA18876.1"/>
    <property type="molecule type" value="Unassigned_DNA"/>
</dbReference>
<dbReference type="PIR" id="S60873">
    <property type="entry name" value="S60873"/>
</dbReference>
<dbReference type="SMR" id="P52933"/>
<dbReference type="GO" id="GO:0005737">
    <property type="term" value="C:cytoplasm"/>
    <property type="evidence" value="ECO:0007669"/>
    <property type="project" value="UniProtKB-SubCell"/>
</dbReference>
<dbReference type="GO" id="GO:0005509">
    <property type="term" value="F:calcium ion binding"/>
    <property type="evidence" value="ECO:0007669"/>
    <property type="project" value="InterPro"/>
</dbReference>
<dbReference type="GO" id="GO:0003677">
    <property type="term" value="F:DNA binding"/>
    <property type="evidence" value="ECO:0007669"/>
    <property type="project" value="UniProtKB-KW"/>
</dbReference>
<dbReference type="GO" id="GO:0003700">
    <property type="term" value="F:DNA-binding transcription factor activity"/>
    <property type="evidence" value="ECO:0007669"/>
    <property type="project" value="InterPro"/>
</dbReference>
<dbReference type="GO" id="GO:0051606">
    <property type="term" value="P:detection of stimulus"/>
    <property type="evidence" value="ECO:0007669"/>
    <property type="project" value="InterPro"/>
</dbReference>
<dbReference type="GO" id="GO:0000160">
    <property type="term" value="P:phosphorelay signal transduction system"/>
    <property type="evidence" value="ECO:0007669"/>
    <property type="project" value="UniProtKB-KW"/>
</dbReference>
<dbReference type="GO" id="GO:0042173">
    <property type="term" value="P:regulation of sporulation resulting in formation of a cellular spore"/>
    <property type="evidence" value="ECO:0007669"/>
    <property type="project" value="InterPro"/>
</dbReference>
<dbReference type="GO" id="GO:0030435">
    <property type="term" value="P:sporulation resulting in formation of a cellular spore"/>
    <property type="evidence" value="ECO:0007669"/>
    <property type="project" value="UniProtKB-KW"/>
</dbReference>
<dbReference type="Gene3D" id="3.40.50.2300">
    <property type="match status" value="1"/>
</dbReference>
<dbReference type="Gene3D" id="1.10.10.10">
    <property type="entry name" value="Winged helix-like DNA-binding domain superfamily/Winged helix DNA-binding domain"/>
    <property type="match status" value="1"/>
</dbReference>
<dbReference type="InterPro" id="IPR011006">
    <property type="entry name" value="CheY-like_superfamily"/>
</dbReference>
<dbReference type="InterPro" id="IPR016032">
    <property type="entry name" value="Sig_transdc_resp-reg_C-effctor"/>
</dbReference>
<dbReference type="InterPro" id="IPR001789">
    <property type="entry name" value="Sig_transdc_resp-reg_receiver"/>
</dbReference>
<dbReference type="InterPro" id="IPR014879">
    <property type="entry name" value="Spo0A_C"/>
</dbReference>
<dbReference type="InterPro" id="IPR012052">
    <property type="entry name" value="Spore_0_A"/>
</dbReference>
<dbReference type="InterPro" id="IPR036388">
    <property type="entry name" value="WH-like_DNA-bd_sf"/>
</dbReference>
<dbReference type="NCBIfam" id="TIGR02875">
    <property type="entry name" value="spore_0_A"/>
    <property type="match status" value="1"/>
</dbReference>
<dbReference type="Pfam" id="PF00072">
    <property type="entry name" value="Response_reg"/>
    <property type="match status" value="1"/>
</dbReference>
<dbReference type="Pfam" id="PF08769">
    <property type="entry name" value="Spo0A_C"/>
    <property type="match status" value="1"/>
</dbReference>
<dbReference type="SUPFAM" id="SSF46894">
    <property type="entry name" value="C-terminal effector domain of the bipartite response regulators"/>
    <property type="match status" value="1"/>
</dbReference>
<dbReference type="SUPFAM" id="SSF52172">
    <property type="entry name" value="CheY-like"/>
    <property type="match status" value="1"/>
</dbReference>
<dbReference type="PROSITE" id="PS50110">
    <property type="entry name" value="RESPONSE_REGULATORY"/>
    <property type="match status" value="1"/>
</dbReference>
<comment type="function">
    <text evidence="1">May play the central regulatory role in sporulation. It may be an element of the effector pathway responsible for the activation of sporulation genes in response to nutritional stress. Spo0A may act in concert with Spo0H (a sigma factor) to control the expression of some genes that are critical to the sporulation process. Repressor of abrB, activator of the spoIIa operon. Binds the DNA sequence 5'-TGNCGAA-3' (0A box) (By similarity).</text>
</comment>
<comment type="cofactor">
    <cofactor evidence="1">
        <name>Ca(2+)</name>
        <dbReference type="ChEBI" id="CHEBI:29108"/>
    </cofactor>
    <text evidence="1">Binds 1 Ca(2+) ion per subunit.</text>
</comment>
<comment type="subcellular location">
    <subcellularLocation>
        <location evidence="5">Cytoplasm</location>
    </subcellularLocation>
</comment>
<comment type="PTM">
    <text evidence="1">Phosphorylated by KinA and KinB.</text>
</comment>
<accession>P52933</accession>
<name>SP0A_BACPU</name>
<sequence>LAVLERLRENNEMTKQPSVIMLTAFGQEDVTKKAVDLGASYFILKPFDMENLVGHIRQVSGNGTQVTHRSSSIQNSVLRNKPPEPKRKNLDASITTIIHEIGVPAHIKGYLYLREAISMVYNDIELLGSITKVLYPDIAKKFNTTASRVERAIRHAIEVAWSRGNIDSISSLFGYTVSMSKAKPTNSEFIA</sequence>
<keyword id="KW-0010">Activator</keyword>
<keyword id="KW-0106">Calcium</keyword>
<keyword id="KW-0963">Cytoplasm</keyword>
<keyword id="KW-0238">DNA-binding</keyword>
<keyword id="KW-0597">Phosphoprotein</keyword>
<keyword id="KW-0678">Repressor</keyword>
<keyword id="KW-0749">Sporulation</keyword>
<keyword id="KW-0804">Transcription</keyword>
<keyword id="KW-0805">Transcription regulation</keyword>
<keyword id="KW-0902">Two-component regulatory system</keyword>
<feature type="chain" id="PRO_0000081231" description="Stage 0 sporulation protein A">
    <location>
        <begin position="1" status="less than"/>
        <end position="191" status="greater than"/>
    </location>
</feature>
<feature type="domain" description="Response regulatory" evidence="3">
    <location>
        <begin position="1" status="less than"/>
        <end position="60"/>
    </location>
</feature>
<feature type="DNA-binding region" description="H-T-H motif" evidence="2">
    <location>
        <begin position="136"/>
        <end position="155"/>
    </location>
</feature>
<feature type="region of interest" description="Disordered" evidence="4">
    <location>
        <begin position="64"/>
        <end position="86"/>
    </location>
</feature>
<feature type="compositionally biased region" description="Polar residues" evidence="4">
    <location>
        <begin position="64"/>
        <end position="78"/>
    </location>
</feature>
<feature type="non-terminal residue">
    <location>
        <position position="1"/>
    </location>
</feature>
<feature type="non-terminal residue">
    <location>
        <position position="191"/>
    </location>
</feature>
<protein>
    <recommendedName>
        <fullName>Stage 0 sporulation protein A</fullName>
    </recommendedName>
</protein>